<protein>
    <recommendedName>
        <fullName>Uridine kinase</fullName>
        <ecNumber>2.7.1.48</ecNumber>
    </recommendedName>
    <alternativeName>
        <fullName>Cytidine monophosphokinase</fullName>
    </alternativeName>
    <alternativeName>
        <fullName>Uridine monophosphokinase</fullName>
    </alternativeName>
</protein>
<sequence>MTDQSHQCVIIGIAGASASGKSLIASTLYRELREQVGDEHIGVIPEDCYYKDQSHLSMEERVKTNYDHPSAMDHSLLLEHLQALKRGSAIDLPVYSYVEHTRMKETVTVEPKKVIILEGILLLTDARLRDELNFSIFVDTPLDICLMRRIKRDVNERGRSMDSVMAQYQKTVRPMFLQFIEPSKQYADIIVPRGGKNRIAIDILKAKISQFFE</sequence>
<reference key="1">
    <citation type="journal article" date="1993" name="J. Bacteriol.">
        <title>Location of the udk gene on the physical map of Escherichia coli.</title>
        <authorList>
            <person name="Neuhard J."/>
            <person name="Tarpo L."/>
        </authorList>
    </citation>
    <scope>NUCLEOTIDE SEQUENCE [GENOMIC DNA]</scope>
    <source>
        <strain>K12</strain>
    </source>
</reference>
<reference key="2">
    <citation type="journal article" date="1996" name="DNA Res.">
        <title>A 460-kb DNA sequence of the Escherichia coli K-12 genome corresponding to the 40.1-50.0 min region on the linkage map.</title>
        <authorList>
            <person name="Itoh T."/>
            <person name="Aiba H."/>
            <person name="Baba T."/>
            <person name="Fujita K."/>
            <person name="Hayashi K."/>
            <person name="Inada T."/>
            <person name="Isono K."/>
            <person name="Kasai H."/>
            <person name="Kimura S."/>
            <person name="Kitakawa M."/>
            <person name="Kitagawa M."/>
            <person name="Makino K."/>
            <person name="Miki T."/>
            <person name="Mizobuchi K."/>
            <person name="Mori H."/>
            <person name="Mori T."/>
            <person name="Motomura K."/>
            <person name="Nakade S."/>
            <person name="Nakamura Y."/>
            <person name="Nashimoto H."/>
            <person name="Nishio Y."/>
            <person name="Oshima T."/>
            <person name="Saito N."/>
            <person name="Sampei G."/>
            <person name="Seki Y."/>
            <person name="Sivasundaram S."/>
            <person name="Tagami H."/>
            <person name="Takeda J."/>
            <person name="Takemoto K."/>
            <person name="Wada C."/>
            <person name="Yamamoto Y."/>
            <person name="Horiuchi T."/>
        </authorList>
    </citation>
    <scope>NUCLEOTIDE SEQUENCE [LARGE SCALE GENOMIC DNA]</scope>
    <source>
        <strain>K12 / W3110 / ATCC 27325 / DSM 5911</strain>
    </source>
</reference>
<reference key="3">
    <citation type="journal article" date="1997" name="Science">
        <title>The complete genome sequence of Escherichia coli K-12.</title>
        <authorList>
            <person name="Blattner F.R."/>
            <person name="Plunkett G. III"/>
            <person name="Bloch C.A."/>
            <person name="Perna N.T."/>
            <person name="Burland V."/>
            <person name="Riley M."/>
            <person name="Collado-Vides J."/>
            <person name="Glasner J.D."/>
            <person name="Rode C.K."/>
            <person name="Mayhew G.F."/>
            <person name="Gregor J."/>
            <person name="Davis N.W."/>
            <person name="Kirkpatrick H.A."/>
            <person name="Goeden M.A."/>
            <person name="Rose D.J."/>
            <person name="Mau B."/>
            <person name="Shao Y."/>
        </authorList>
    </citation>
    <scope>NUCLEOTIDE SEQUENCE [LARGE SCALE GENOMIC DNA]</scope>
    <source>
        <strain>K12 / MG1655 / ATCC 47076</strain>
    </source>
</reference>
<reference key="4">
    <citation type="journal article" date="2006" name="Mol. Syst. Biol.">
        <title>Highly accurate genome sequences of Escherichia coli K-12 strains MG1655 and W3110.</title>
        <authorList>
            <person name="Hayashi K."/>
            <person name="Morooka N."/>
            <person name="Yamamoto Y."/>
            <person name="Fujita K."/>
            <person name="Isono K."/>
            <person name="Choi S."/>
            <person name="Ohtsubo E."/>
            <person name="Baba T."/>
            <person name="Wanner B.L."/>
            <person name="Mori H."/>
            <person name="Horiuchi T."/>
        </authorList>
    </citation>
    <scope>NUCLEOTIDE SEQUENCE [LARGE SCALE GENOMIC DNA]</scope>
    <source>
        <strain>K12 / W3110 / ATCC 27325 / DSM 5911</strain>
    </source>
</reference>
<gene>
    <name type="primary">udk</name>
    <name type="ordered locus">b2066</name>
    <name type="ordered locus">JW2051</name>
</gene>
<keyword id="KW-0067">ATP-binding</keyword>
<keyword id="KW-0963">Cytoplasm</keyword>
<keyword id="KW-0418">Kinase</keyword>
<keyword id="KW-0547">Nucleotide-binding</keyword>
<keyword id="KW-1185">Reference proteome</keyword>
<keyword id="KW-0808">Transferase</keyword>
<proteinExistence type="inferred from homology"/>
<organism>
    <name type="scientific">Escherichia coli (strain K12)</name>
    <dbReference type="NCBI Taxonomy" id="83333"/>
    <lineage>
        <taxon>Bacteria</taxon>
        <taxon>Pseudomonadati</taxon>
        <taxon>Pseudomonadota</taxon>
        <taxon>Gammaproteobacteria</taxon>
        <taxon>Enterobacterales</taxon>
        <taxon>Enterobacteriaceae</taxon>
        <taxon>Escherichia</taxon>
    </lineage>
</organism>
<evidence type="ECO:0000255" key="1"/>
<evidence type="ECO:0000305" key="2"/>
<accession>P0A8F4</accession>
<accession>P31218</accession>
<accession>P78085</accession>
<accession>Q8X7L3</accession>
<feature type="chain" id="PRO_0000164470" description="Uridine kinase">
    <location>
        <begin position="1"/>
        <end position="213"/>
    </location>
</feature>
<feature type="binding site" evidence="1">
    <location>
        <begin position="15"/>
        <end position="22"/>
    </location>
    <ligand>
        <name>ATP</name>
        <dbReference type="ChEBI" id="CHEBI:30616"/>
    </ligand>
</feature>
<comment type="catalytic activity">
    <reaction>
        <text>uridine + ATP = UMP + ADP + H(+)</text>
        <dbReference type="Rhea" id="RHEA:16825"/>
        <dbReference type="ChEBI" id="CHEBI:15378"/>
        <dbReference type="ChEBI" id="CHEBI:16704"/>
        <dbReference type="ChEBI" id="CHEBI:30616"/>
        <dbReference type="ChEBI" id="CHEBI:57865"/>
        <dbReference type="ChEBI" id="CHEBI:456216"/>
        <dbReference type="EC" id="2.7.1.48"/>
    </reaction>
</comment>
<comment type="catalytic activity">
    <reaction>
        <text>cytidine + ATP = CMP + ADP + H(+)</text>
        <dbReference type="Rhea" id="RHEA:24674"/>
        <dbReference type="ChEBI" id="CHEBI:15378"/>
        <dbReference type="ChEBI" id="CHEBI:17562"/>
        <dbReference type="ChEBI" id="CHEBI:30616"/>
        <dbReference type="ChEBI" id="CHEBI:60377"/>
        <dbReference type="ChEBI" id="CHEBI:456216"/>
        <dbReference type="EC" id="2.7.1.48"/>
    </reaction>
</comment>
<comment type="pathway">
    <text>Pyrimidine metabolism; CTP biosynthesis via salvage pathway; CTP from cytidine: step 1/3.</text>
</comment>
<comment type="pathway">
    <text>Pyrimidine metabolism; UMP biosynthesis via salvage pathway; UMP from uridine: step 1/1.</text>
</comment>
<comment type="subunit">
    <text>Homotetramer.</text>
</comment>
<comment type="subcellular location">
    <subcellularLocation>
        <location>Cytoplasm</location>
    </subcellularLocation>
</comment>
<comment type="similarity">
    <text evidence="2">Belongs to the uridine kinase family.</text>
</comment>
<dbReference type="EC" id="2.7.1.48"/>
<dbReference type="EMBL" id="X71492">
    <property type="protein sequence ID" value="CAA50593.1"/>
    <property type="molecule type" value="Genomic_DNA"/>
</dbReference>
<dbReference type="EMBL" id="U00096">
    <property type="protein sequence ID" value="AAC75127.2"/>
    <property type="molecule type" value="Genomic_DNA"/>
</dbReference>
<dbReference type="EMBL" id="AP009048">
    <property type="protein sequence ID" value="BAA15919.1"/>
    <property type="molecule type" value="Genomic_DNA"/>
</dbReference>
<dbReference type="PIR" id="A64973">
    <property type="entry name" value="A64973"/>
</dbReference>
<dbReference type="RefSeq" id="NP_416570.2">
    <property type="nucleotide sequence ID" value="NC_000913.3"/>
</dbReference>
<dbReference type="RefSeq" id="WP_001295424.1">
    <property type="nucleotide sequence ID" value="NZ_STEB01000002.1"/>
</dbReference>
<dbReference type="SMR" id="P0A8F4"/>
<dbReference type="BioGRID" id="4259683">
    <property type="interactions" value="22"/>
</dbReference>
<dbReference type="BioGRID" id="850944">
    <property type="interactions" value="3"/>
</dbReference>
<dbReference type="DIP" id="DIP-36012N"/>
<dbReference type="FunCoup" id="P0A8F4">
    <property type="interactions" value="609"/>
</dbReference>
<dbReference type="IntAct" id="P0A8F4">
    <property type="interactions" value="12"/>
</dbReference>
<dbReference type="STRING" id="511145.b2066"/>
<dbReference type="jPOST" id="P0A8F4"/>
<dbReference type="PaxDb" id="511145-b2066"/>
<dbReference type="EnsemblBacteria" id="AAC75127">
    <property type="protein sequence ID" value="AAC75127"/>
    <property type="gene ID" value="b2066"/>
</dbReference>
<dbReference type="GeneID" id="93775125"/>
<dbReference type="GeneID" id="946597"/>
<dbReference type="KEGG" id="ecj:JW2051"/>
<dbReference type="KEGG" id="eco:b2066"/>
<dbReference type="KEGG" id="ecoc:C3026_11620"/>
<dbReference type="PATRIC" id="fig|511145.12.peg.2143"/>
<dbReference type="EchoBASE" id="EB1652"/>
<dbReference type="eggNOG" id="COG0572">
    <property type="taxonomic scope" value="Bacteria"/>
</dbReference>
<dbReference type="HOGENOM" id="CLU_021278_1_2_6"/>
<dbReference type="InParanoid" id="P0A8F4"/>
<dbReference type="OMA" id="TVKPMHE"/>
<dbReference type="OrthoDB" id="9777642at2"/>
<dbReference type="PhylomeDB" id="P0A8F4"/>
<dbReference type="BioCyc" id="EcoCyc:UDK-MONOMER"/>
<dbReference type="BioCyc" id="MetaCyc:UDK-MONOMER"/>
<dbReference type="UniPathway" id="UPA00574">
    <property type="reaction ID" value="UER00637"/>
</dbReference>
<dbReference type="UniPathway" id="UPA00579">
    <property type="reaction ID" value="UER00640"/>
</dbReference>
<dbReference type="PRO" id="PR:P0A8F4"/>
<dbReference type="Proteomes" id="UP000000625">
    <property type="component" value="Chromosome"/>
</dbReference>
<dbReference type="GO" id="GO:0005737">
    <property type="term" value="C:cytoplasm"/>
    <property type="evidence" value="ECO:0000318"/>
    <property type="project" value="GO_Central"/>
</dbReference>
<dbReference type="GO" id="GO:0005829">
    <property type="term" value="C:cytosol"/>
    <property type="evidence" value="ECO:0000314"/>
    <property type="project" value="EcoCyc"/>
</dbReference>
<dbReference type="GO" id="GO:0005524">
    <property type="term" value="F:ATP binding"/>
    <property type="evidence" value="ECO:0007669"/>
    <property type="project" value="UniProtKB-UniRule"/>
</dbReference>
<dbReference type="GO" id="GO:0043771">
    <property type="term" value="F:cytidine kinase activity"/>
    <property type="evidence" value="ECO:0000314"/>
    <property type="project" value="EcoCyc"/>
</dbReference>
<dbReference type="GO" id="GO:0004849">
    <property type="term" value="F:uridine kinase activity"/>
    <property type="evidence" value="ECO:0000314"/>
    <property type="project" value="EcoCyc"/>
</dbReference>
<dbReference type="GO" id="GO:0044211">
    <property type="term" value="P:CTP salvage"/>
    <property type="evidence" value="ECO:0007669"/>
    <property type="project" value="UniProtKB-UniRule"/>
</dbReference>
<dbReference type="GO" id="GO:0044206">
    <property type="term" value="P:UMP salvage"/>
    <property type="evidence" value="ECO:0007669"/>
    <property type="project" value="UniProtKB-UniRule"/>
</dbReference>
<dbReference type="CDD" id="cd02023">
    <property type="entry name" value="UMPK"/>
    <property type="match status" value="1"/>
</dbReference>
<dbReference type="FunFam" id="3.40.50.300:FF:000252">
    <property type="entry name" value="Uridine kinase"/>
    <property type="match status" value="1"/>
</dbReference>
<dbReference type="Gene3D" id="3.40.50.300">
    <property type="entry name" value="P-loop containing nucleotide triphosphate hydrolases"/>
    <property type="match status" value="1"/>
</dbReference>
<dbReference type="HAMAP" id="MF_00551">
    <property type="entry name" value="Uridine_kinase"/>
    <property type="match status" value="1"/>
</dbReference>
<dbReference type="InterPro" id="IPR027417">
    <property type="entry name" value="P-loop_NTPase"/>
</dbReference>
<dbReference type="InterPro" id="IPR006083">
    <property type="entry name" value="PRK/URK"/>
</dbReference>
<dbReference type="InterPro" id="IPR026008">
    <property type="entry name" value="Uridine_kinase"/>
</dbReference>
<dbReference type="InterPro" id="IPR000764">
    <property type="entry name" value="Uridine_kinase-like"/>
</dbReference>
<dbReference type="NCBIfam" id="NF004018">
    <property type="entry name" value="PRK05480.1"/>
    <property type="match status" value="1"/>
</dbReference>
<dbReference type="NCBIfam" id="TIGR00235">
    <property type="entry name" value="udk"/>
    <property type="match status" value="1"/>
</dbReference>
<dbReference type="PANTHER" id="PTHR10285">
    <property type="entry name" value="URIDINE KINASE"/>
    <property type="match status" value="1"/>
</dbReference>
<dbReference type="Pfam" id="PF00485">
    <property type="entry name" value="PRK"/>
    <property type="match status" value="1"/>
</dbReference>
<dbReference type="PRINTS" id="PR00988">
    <property type="entry name" value="URIDINKINASE"/>
</dbReference>
<dbReference type="SUPFAM" id="SSF52540">
    <property type="entry name" value="P-loop containing nucleoside triphosphate hydrolases"/>
    <property type="match status" value="1"/>
</dbReference>
<name>URK_ECOLI</name>